<keyword id="KW-0221">Differentiation</keyword>
<keyword id="KW-0472">Membrane</keyword>
<keyword id="KW-0539">Nucleus</keyword>
<keyword id="KW-0597">Phosphoprotein</keyword>
<keyword id="KW-1185">Reference proteome</keyword>
<keyword id="KW-0812">Transmembrane</keyword>
<keyword id="KW-1133">Transmembrane helix</keyword>
<feature type="chain" id="PRO_0000279878" description="Transmembrane protein 176B">
    <location>
        <begin position="1"/>
        <end position="263"/>
    </location>
</feature>
<feature type="transmembrane region" description="Helical" evidence="2">
    <location>
        <begin position="61"/>
        <end position="81"/>
    </location>
</feature>
<feature type="transmembrane region" description="Helical" evidence="2">
    <location>
        <begin position="89"/>
        <end position="109"/>
    </location>
</feature>
<feature type="transmembrane region" description="Helical" evidence="2">
    <location>
        <begin position="125"/>
        <end position="145"/>
    </location>
</feature>
<feature type="transmembrane region" description="Helical" evidence="2">
    <location>
        <begin position="197"/>
        <end position="217"/>
    </location>
</feature>
<feature type="region of interest" description="Disordered" evidence="3">
    <location>
        <begin position="242"/>
        <end position="263"/>
    </location>
</feature>
<feature type="modified residue" description="Phosphoserine" evidence="6">
    <location>
        <position position="249"/>
    </location>
</feature>
<feature type="modified residue" description="Phosphoserine" evidence="6">
    <location>
        <position position="253"/>
    </location>
</feature>
<accession>Q925D4</accession>
<protein>
    <recommendedName>
        <fullName>Transmembrane protein 176B</fullName>
    </recommendedName>
    <alternativeName>
        <fullName>Protein LR8</fullName>
    </alternativeName>
    <alternativeName>
        <fullName>Tolerance-related and induced transcript protein</fullName>
    </alternativeName>
</protein>
<proteinExistence type="evidence at protein level"/>
<sequence length="263" mass="28485">MAQATVTVDGVKVTSTRPQSAQISIHIHHKSALEQLLGAMGSLKKFLSYPQARIHYGQLSLGVTQILLGLVSCVLGVCLYFGPWTELCASGCAFWSGSVAILAGVGIVIHEMGQGKLSGHISRLLLLACSATAAAATVMGVKSLIWQTSASYYFEISSTCDSLQPSIVDRFRSVRFTDDSDWRTERCREYLRMMMNLFLAFCILFTVICILKIVVSVASLGLSLRSMCGRNSQVLNDEETEKKLLGGDSAPASPTKEKIPVTP</sequence>
<reference key="1">
    <citation type="journal article" date="2005" name="Am. J. Transplant.">
        <title>Identification of a new member of the CD20/FcepsilonRIbeta family overexpressed in tolerated allografts.</title>
        <authorList>
            <person name="Louvet C."/>
            <person name="Chiffoleau E."/>
            <person name="Heslan M."/>
            <person name="Tesson L."/>
            <person name="Heslan J.-M."/>
            <person name="Brion R."/>
            <person name="Beriou G."/>
            <person name="Guillonneau C."/>
            <person name="Khalife J."/>
            <person name="Anegon I."/>
            <person name="Cuturi M.-C."/>
        </authorList>
    </citation>
    <scope>NUCLEOTIDE SEQUENCE [MRNA]</scope>
    <scope>FUNCTION</scope>
    <scope>INDUCTION</scope>
    <scope>TISSUE SPECIFICITY</scope>
    <scope>SUBCELLULAR LOCATION</scope>
    <source>
        <strain>Lewis</strain>
    </source>
</reference>
<reference key="2">
    <citation type="journal article" date="2004" name="Genome Res.">
        <title>The status, quality, and expansion of the NIH full-length cDNA project: the Mammalian Gene Collection (MGC).</title>
        <authorList>
            <consortium name="The MGC Project Team"/>
        </authorList>
    </citation>
    <scope>NUCLEOTIDE SEQUENCE [LARGE SCALE MRNA]</scope>
    <source>
        <tissue>Pituitary</tissue>
    </source>
</reference>
<reference key="3">
    <citation type="journal article" date="2012" name="Nat. Commun.">
        <title>Quantitative maps of protein phosphorylation sites across 14 different rat organs and tissues.</title>
        <authorList>
            <person name="Lundby A."/>
            <person name="Secher A."/>
            <person name="Lage K."/>
            <person name="Nordsborg N.B."/>
            <person name="Dmytriyev A."/>
            <person name="Lundby C."/>
            <person name="Olsen J.V."/>
        </authorList>
    </citation>
    <scope>PHOSPHORYLATION [LARGE SCALE ANALYSIS] AT SER-249 AND SER-253</scope>
    <scope>IDENTIFICATION BY MASS SPECTROMETRY [LARGE SCALE ANALYSIS]</scope>
</reference>
<gene>
    <name type="primary">Tmem176b</name>
    <name type="synonym">Lr8</name>
    <name type="synonym">Torid</name>
</gene>
<dbReference type="EMBL" id="AF370882">
    <property type="protein sequence ID" value="AAK51554.1"/>
    <property type="molecule type" value="mRNA"/>
</dbReference>
<dbReference type="EMBL" id="BC059116">
    <property type="protein sequence ID" value="AAH59116.1"/>
    <property type="molecule type" value="mRNA"/>
</dbReference>
<dbReference type="RefSeq" id="NP_001257518.1">
    <property type="nucleotide sequence ID" value="NM_001270589.1"/>
</dbReference>
<dbReference type="RefSeq" id="NP_001257519.1">
    <property type="nucleotide sequence ID" value="NM_001270590.1"/>
</dbReference>
<dbReference type="RefSeq" id="NP_001257520.1">
    <property type="nucleotide sequence ID" value="NM_001270591.1"/>
</dbReference>
<dbReference type="RefSeq" id="NP_001257521.1">
    <property type="nucleotide sequence ID" value="NM_001270592.1"/>
</dbReference>
<dbReference type="RefSeq" id="NP_001257522.1">
    <property type="nucleotide sequence ID" value="NM_001270593.1"/>
</dbReference>
<dbReference type="RefSeq" id="NP_001257523.1">
    <property type="nucleotide sequence ID" value="NM_001270594.1"/>
</dbReference>
<dbReference type="RefSeq" id="NP_599217.1">
    <property type="nucleotide sequence ID" value="NM_134390.3"/>
</dbReference>
<dbReference type="RefSeq" id="XP_006236517.1">
    <property type="nucleotide sequence ID" value="XM_006236455.3"/>
</dbReference>
<dbReference type="RefSeq" id="XP_017447913.1">
    <property type="nucleotide sequence ID" value="XM_017592424.1"/>
</dbReference>
<dbReference type="BioGRID" id="251237">
    <property type="interactions" value="1"/>
</dbReference>
<dbReference type="FunCoup" id="Q925D4">
    <property type="interactions" value="50"/>
</dbReference>
<dbReference type="IntAct" id="Q925D4">
    <property type="interactions" value="3"/>
</dbReference>
<dbReference type="STRING" id="10116.ENSRNOP00000074935"/>
<dbReference type="iPTMnet" id="Q925D4"/>
<dbReference type="PhosphoSitePlus" id="Q925D4"/>
<dbReference type="PaxDb" id="10116-ENSRNOP00000011327"/>
<dbReference type="Ensembl" id="ENSRNOT00000011327.7">
    <property type="protein sequence ID" value="ENSRNOP00000011327.3"/>
    <property type="gene ID" value="ENSRNOG00000008465.7"/>
</dbReference>
<dbReference type="GeneID" id="171411"/>
<dbReference type="KEGG" id="rno:171411"/>
<dbReference type="UCSC" id="RGD:708403">
    <property type="organism name" value="rat"/>
</dbReference>
<dbReference type="AGR" id="RGD:708403"/>
<dbReference type="CTD" id="28959"/>
<dbReference type="RGD" id="708403">
    <property type="gene designation" value="Tmem176b"/>
</dbReference>
<dbReference type="eggNOG" id="ENOG502SF8T">
    <property type="taxonomic scope" value="Eukaryota"/>
</dbReference>
<dbReference type="GeneTree" id="ENSGT00530000064074"/>
<dbReference type="InParanoid" id="Q925D4"/>
<dbReference type="OMA" id="WEEDRCR"/>
<dbReference type="OrthoDB" id="8951938at2759"/>
<dbReference type="PhylomeDB" id="Q925D4"/>
<dbReference type="TreeFam" id="TF335389"/>
<dbReference type="PRO" id="PR:Q925D4"/>
<dbReference type="Proteomes" id="UP000002494">
    <property type="component" value="Chromosome 4"/>
</dbReference>
<dbReference type="Bgee" id="ENSRNOG00000008465">
    <property type="expression patterns" value="Expressed in ovary and 20 other cell types or tissues"/>
</dbReference>
<dbReference type="GO" id="GO:0031965">
    <property type="term" value="C:nuclear membrane"/>
    <property type="evidence" value="ECO:0007669"/>
    <property type="project" value="UniProtKB-SubCell"/>
</dbReference>
<dbReference type="GO" id="GO:0097028">
    <property type="term" value="P:dendritic cell differentiation"/>
    <property type="evidence" value="ECO:0000266"/>
    <property type="project" value="RGD"/>
</dbReference>
<dbReference type="GO" id="GO:2001199">
    <property type="term" value="P:negative regulation of dendritic cell differentiation"/>
    <property type="evidence" value="ECO:0000266"/>
    <property type="project" value="RGD"/>
</dbReference>
<dbReference type="InterPro" id="IPR007237">
    <property type="entry name" value="CD20-like"/>
</dbReference>
<dbReference type="InterPro" id="IPR009281">
    <property type="entry name" value="TMEM176A/TMEM176B"/>
</dbReference>
<dbReference type="PANTHER" id="PTHR15756">
    <property type="entry name" value="LR8/HCA112"/>
    <property type="match status" value="1"/>
</dbReference>
<dbReference type="PANTHER" id="PTHR15756:SF7">
    <property type="entry name" value="TRANSMEMBRANE PROTEIN 176B"/>
    <property type="match status" value="1"/>
</dbReference>
<dbReference type="Pfam" id="PF04103">
    <property type="entry name" value="CD20"/>
    <property type="match status" value="1"/>
</dbReference>
<organism>
    <name type="scientific">Rattus norvegicus</name>
    <name type="common">Rat</name>
    <dbReference type="NCBI Taxonomy" id="10116"/>
    <lineage>
        <taxon>Eukaryota</taxon>
        <taxon>Metazoa</taxon>
        <taxon>Chordata</taxon>
        <taxon>Craniata</taxon>
        <taxon>Vertebrata</taxon>
        <taxon>Euteleostomi</taxon>
        <taxon>Mammalia</taxon>
        <taxon>Eutheria</taxon>
        <taxon>Euarchontoglires</taxon>
        <taxon>Glires</taxon>
        <taxon>Rodentia</taxon>
        <taxon>Myomorpha</taxon>
        <taxon>Muroidea</taxon>
        <taxon>Muridae</taxon>
        <taxon>Murinae</taxon>
        <taxon>Rattus</taxon>
    </lineage>
</organism>
<name>T176B_RAT</name>
<comment type="function">
    <text evidence="1 4">Required for the development of cerebellar granule cells (By similarity). May play a role in the process of maturation of dendritic cells.</text>
</comment>
<comment type="subcellular location">
    <subcellularLocation>
        <location evidence="4">Nucleus membrane</location>
        <topology evidence="4">Multi-pass membrane protein</topology>
    </subcellularLocation>
</comment>
<comment type="tissue specificity">
    <text evidence="4">Expressed in spleen by a variety of myeloid cells including macrophages and dendritic cells (at protein level). Ubiquitously expressed with higher expression in lymphoid tissues.</text>
</comment>
<comment type="induction">
    <text evidence="4">Up-regulated in tolerated allografts. Down-regulated in activated macrophages.</text>
</comment>
<comment type="miscellaneous">
    <text>Overexpression of Tmem176b alters maturation of bone marrow-derived dendritic cells.</text>
</comment>
<comment type="similarity">
    <text evidence="5">Belongs to the TMEM176 family.</text>
</comment>
<evidence type="ECO:0000250" key="1"/>
<evidence type="ECO:0000255" key="2"/>
<evidence type="ECO:0000256" key="3">
    <source>
        <dbReference type="SAM" id="MobiDB-lite"/>
    </source>
</evidence>
<evidence type="ECO:0000269" key="4">
    <source>
    </source>
</evidence>
<evidence type="ECO:0000305" key="5"/>
<evidence type="ECO:0007744" key="6">
    <source>
    </source>
</evidence>